<name>Y8514_DICDI</name>
<evidence type="ECO:0000250" key="1"/>
<evidence type="ECO:0000255" key="2">
    <source>
        <dbReference type="PROSITE-ProRule" id="PRU00129"/>
    </source>
</evidence>
<evidence type="ECO:0000255" key="3">
    <source>
        <dbReference type="PROSITE-ProRule" id="PRU00175"/>
    </source>
</evidence>
<evidence type="ECO:0000255" key="4">
    <source>
        <dbReference type="PROSITE-ProRule" id="PRU00207"/>
    </source>
</evidence>
<evidence type="ECO:0000305" key="5"/>
<proteinExistence type="inferred from homology"/>
<organism>
    <name type="scientific">Dictyostelium discoideum</name>
    <name type="common">Social amoeba</name>
    <dbReference type="NCBI Taxonomy" id="44689"/>
    <lineage>
        <taxon>Eukaryota</taxon>
        <taxon>Amoebozoa</taxon>
        <taxon>Evosea</taxon>
        <taxon>Eumycetozoa</taxon>
        <taxon>Dictyostelia</taxon>
        <taxon>Dictyosteliales</taxon>
        <taxon>Dictyosteliaceae</taxon>
        <taxon>Dictyostelium</taxon>
    </lineage>
</organism>
<feature type="chain" id="PRO_0000393753" description="TNF receptor-associated factor family protein DDB_G0285149">
    <location>
        <begin position="1"/>
        <end position="427"/>
    </location>
</feature>
<feature type="domain" description="MATH" evidence="2">
    <location>
        <begin position="284"/>
        <end position="415"/>
    </location>
</feature>
<feature type="zinc finger region" description="RING-type" evidence="3">
    <location>
        <begin position="20"/>
        <end position="65"/>
    </location>
</feature>
<feature type="zinc finger region" description="TRAF-type 1" evidence="4">
    <location>
        <begin position="122"/>
        <end position="178"/>
    </location>
</feature>
<feature type="zinc finger region" description="TRAF-type 2" evidence="4">
    <location>
        <begin position="178"/>
        <end position="234"/>
    </location>
</feature>
<gene>
    <name type="ORF">DDB_G0285149</name>
</gene>
<comment type="function">
    <text evidence="1">Probable adapter protein and signal transducer that links members of the tumor necrosis factor receptor family to different signaling pathways by association with the receptor cytoplasmic domain and kinases.</text>
</comment>
<comment type="subcellular location">
    <subcellularLocation>
        <location evidence="1">Cytoplasm</location>
    </subcellularLocation>
</comment>
<comment type="domain">
    <text>The MATH/TRAF domain binds to receptor cytoplasmic domains.</text>
</comment>
<comment type="similarity">
    <text evidence="5">Belongs to the TNF receptor-associated factor family. A subfamily.</text>
</comment>
<reference key="1">
    <citation type="journal article" date="2005" name="Nature">
        <title>The genome of the social amoeba Dictyostelium discoideum.</title>
        <authorList>
            <person name="Eichinger L."/>
            <person name="Pachebat J.A."/>
            <person name="Gloeckner G."/>
            <person name="Rajandream M.A."/>
            <person name="Sucgang R."/>
            <person name="Berriman M."/>
            <person name="Song J."/>
            <person name="Olsen R."/>
            <person name="Szafranski K."/>
            <person name="Xu Q."/>
            <person name="Tunggal B."/>
            <person name="Kummerfeld S."/>
            <person name="Madera M."/>
            <person name="Konfortov B.A."/>
            <person name="Rivero F."/>
            <person name="Bankier A.T."/>
            <person name="Lehmann R."/>
            <person name="Hamlin N."/>
            <person name="Davies R."/>
            <person name="Gaudet P."/>
            <person name="Fey P."/>
            <person name="Pilcher K."/>
            <person name="Chen G."/>
            <person name="Saunders D."/>
            <person name="Sodergren E.J."/>
            <person name="Davis P."/>
            <person name="Kerhornou A."/>
            <person name="Nie X."/>
            <person name="Hall N."/>
            <person name="Anjard C."/>
            <person name="Hemphill L."/>
            <person name="Bason N."/>
            <person name="Farbrother P."/>
            <person name="Desany B."/>
            <person name="Just E."/>
            <person name="Morio T."/>
            <person name="Rost R."/>
            <person name="Churcher C.M."/>
            <person name="Cooper J."/>
            <person name="Haydock S."/>
            <person name="van Driessche N."/>
            <person name="Cronin A."/>
            <person name="Goodhead I."/>
            <person name="Muzny D.M."/>
            <person name="Mourier T."/>
            <person name="Pain A."/>
            <person name="Lu M."/>
            <person name="Harper D."/>
            <person name="Lindsay R."/>
            <person name="Hauser H."/>
            <person name="James K.D."/>
            <person name="Quiles M."/>
            <person name="Madan Babu M."/>
            <person name="Saito T."/>
            <person name="Buchrieser C."/>
            <person name="Wardroper A."/>
            <person name="Felder M."/>
            <person name="Thangavelu M."/>
            <person name="Johnson D."/>
            <person name="Knights A."/>
            <person name="Loulseged H."/>
            <person name="Mungall K.L."/>
            <person name="Oliver K."/>
            <person name="Price C."/>
            <person name="Quail M.A."/>
            <person name="Urushihara H."/>
            <person name="Hernandez J."/>
            <person name="Rabbinowitsch E."/>
            <person name="Steffen D."/>
            <person name="Sanders M."/>
            <person name="Ma J."/>
            <person name="Kohara Y."/>
            <person name="Sharp S."/>
            <person name="Simmonds M.N."/>
            <person name="Spiegler S."/>
            <person name="Tivey A."/>
            <person name="Sugano S."/>
            <person name="White B."/>
            <person name="Walker D."/>
            <person name="Woodward J.R."/>
            <person name="Winckler T."/>
            <person name="Tanaka Y."/>
            <person name="Shaulsky G."/>
            <person name="Schleicher M."/>
            <person name="Weinstock G.M."/>
            <person name="Rosenthal A."/>
            <person name="Cox E.C."/>
            <person name="Chisholm R.L."/>
            <person name="Gibbs R.A."/>
            <person name="Loomis W.F."/>
            <person name="Platzer M."/>
            <person name="Kay R.R."/>
            <person name="Williams J.G."/>
            <person name="Dear P.H."/>
            <person name="Noegel A.A."/>
            <person name="Barrell B.G."/>
            <person name="Kuspa A."/>
        </authorList>
    </citation>
    <scope>NUCLEOTIDE SEQUENCE [LARGE SCALE GENOMIC DNA]</scope>
    <source>
        <strain>AX4</strain>
    </source>
</reference>
<protein>
    <recommendedName>
        <fullName>TNF receptor-associated factor family protein DDB_G0285149</fullName>
    </recommendedName>
</protein>
<accession>Q54NN4</accession>
<sequence length="427" mass="50087">MTEFKISDLLVKPLSESFSCIVCTDLLSESHDKIQVNQCPHGHCLCSDCWTKQIENKKKECPICRAKVKLEFLSRNLFLESEFKKKKVYCKYQYKEEKEDGKIIKDEENGCKDIIRIEEMETHFKNCQYAFINCPNGDECKINSRFRKNQLEEHNKSCEYLKVPCQYCKTPIAKINKDHLESECQSYKIKCTHCKLEMLRMELSEHLEVCPEMTIQCKYKEGGCQVSFQRKHQANHLASENNHIGFIQNIIDQHRILLDESDRCFKRLKCSHETLEKRLTNINKYSNQWVIENWMQKVIDIPNDEVTSTKRVSCPMFYFNSRKYNVSCFPNGFTPANKDYISLYLHLHEASPNINIKFSFEIVNSDPTKSIKKEKNSYFQNDKGIGWEKFAECKTINTLGEGFVVGNKLTIKFEIEIPQTIDPLTTK</sequence>
<keyword id="KW-0963">Cytoplasm</keyword>
<keyword id="KW-0479">Metal-binding</keyword>
<keyword id="KW-1185">Reference proteome</keyword>
<keyword id="KW-0677">Repeat</keyword>
<keyword id="KW-0862">Zinc</keyword>
<keyword id="KW-0863">Zinc-finger</keyword>
<dbReference type="EMBL" id="AAFI02000074">
    <property type="protein sequence ID" value="EAL64887.1"/>
    <property type="molecule type" value="Genomic_DNA"/>
</dbReference>
<dbReference type="RefSeq" id="XP_639882.1">
    <property type="nucleotide sequence ID" value="XM_634790.1"/>
</dbReference>
<dbReference type="SMR" id="Q54NN4"/>
<dbReference type="FunCoup" id="Q54NN4">
    <property type="interactions" value="7"/>
</dbReference>
<dbReference type="STRING" id="44689.Q54NN4"/>
<dbReference type="PaxDb" id="44689-DDB0237661"/>
<dbReference type="EnsemblProtists" id="EAL64887">
    <property type="protein sequence ID" value="EAL64887"/>
    <property type="gene ID" value="DDB_G0285149"/>
</dbReference>
<dbReference type="GeneID" id="8624953"/>
<dbReference type="KEGG" id="ddi:DDB_G0285149"/>
<dbReference type="dictyBase" id="DDB_G0285149">
    <property type="gene designation" value="trafB"/>
</dbReference>
<dbReference type="VEuPathDB" id="AmoebaDB:DDB_G0285149"/>
<dbReference type="eggNOG" id="KOG0297">
    <property type="taxonomic scope" value="Eukaryota"/>
</dbReference>
<dbReference type="HOGENOM" id="CLU_040980_0_0_1"/>
<dbReference type="InParanoid" id="Q54NN4"/>
<dbReference type="OMA" id="PCPNGCK"/>
<dbReference type="PhylomeDB" id="Q54NN4"/>
<dbReference type="PRO" id="PR:Q54NN4"/>
<dbReference type="Proteomes" id="UP000002195">
    <property type="component" value="Chromosome 4"/>
</dbReference>
<dbReference type="GO" id="GO:0005737">
    <property type="term" value="C:cytoplasm"/>
    <property type="evidence" value="ECO:0000318"/>
    <property type="project" value="GO_Central"/>
</dbReference>
<dbReference type="GO" id="GO:0005634">
    <property type="term" value="C:nucleus"/>
    <property type="evidence" value="ECO:0000314"/>
    <property type="project" value="dictyBase"/>
</dbReference>
<dbReference type="GO" id="GO:0008270">
    <property type="term" value="F:zinc ion binding"/>
    <property type="evidence" value="ECO:0007669"/>
    <property type="project" value="UniProtKB-KW"/>
</dbReference>
<dbReference type="CDD" id="cd00121">
    <property type="entry name" value="MATH"/>
    <property type="match status" value="1"/>
</dbReference>
<dbReference type="Gene3D" id="2.60.210.10">
    <property type="entry name" value="Apoptosis, Tumor Necrosis Factor Receptor Associated Protein 2, Chain A"/>
    <property type="match status" value="1"/>
</dbReference>
<dbReference type="Gene3D" id="3.30.40.10">
    <property type="entry name" value="Zinc/RING finger domain, C3HC4 (zinc finger)"/>
    <property type="match status" value="3"/>
</dbReference>
<dbReference type="InterPro" id="IPR002083">
    <property type="entry name" value="MATH/TRAF_dom"/>
</dbReference>
<dbReference type="InterPro" id="IPR008974">
    <property type="entry name" value="TRAF-like"/>
</dbReference>
<dbReference type="InterPro" id="IPR001841">
    <property type="entry name" value="Znf_RING"/>
</dbReference>
<dbReference type="InterPro" id="IPR013083">
    <property type="entry name" value="Znf_RING/FYVE/PHD"/>
</dbReference>
<dbReference type="InterPro" id="IPR001293">
    <property type="entry name" value="Znf_TRAF"/>
</dbReference>
<dbReference type="PANTHER" id="PTHR10131:SF156">
    <property type="entry name" value="RING-TYPE DOMAIN-CONTAINING PROTEIN-RELATED"/>
    <property type="match status" value="1"/>
</dbReference>
<dbReference type="PANTHER" id="PTHR10131">
    <property type="entry name" value="TNF RECEPTOR ASSOCIATED FACTOR"/>
    <property type="match status" value="1"/>
</dbReference>
<dbReference type="Pfam" id="PF22486">
    <property type="entry name" value="MATH_2"/>
    <property type="match status" value="1"/>
</dbReference>
<dbReference type="Pfam" id="PF02176">
    <property type="entry name" value="zf-TRAF"/>
    <property type="match status" value="1"/>
</dbReference>
<dbReference type="SUPFAM" id="SSF57850">
    <property type="entry name" value="RING/U-box"/>
    <property type="match status" value="1"/>
</dbReference>
<dbReference type="SUPFAM" id="SSF49599">
    <property type="entry name" value="TRAF domain-like"/>
    <property type="match status" value="3"/>
</dbReference>
<dbReference type="PROSITE" id="PS50144">
    <property type="entry name" value="MATH"/>
    <property type="match status" value="1"/>
</dbReference>
<dbReference type="PROSITE" id="PS50089">
    <property type="entry name" value="ZF_RING_2"/>
    <property type="match status" value="1"/>
</dbReference>
<dbReference type="PROSITE" id="PS50145">
    <property type="entry name" value="ZF_TRAF"/>
    <property type="match status" value="2"/>
</dbReference>